<comment type="similarity">
    <text evidence="1">Belongs to the eukaryotic ribosomal protein eS4 family.</text>
</comment>
<feature type="chain" id="PRO_0000130853" description="Small ribosomal subunit protein eS4">
    <location>
        <begin position="1"/>
        <end position="242"/>
    </location>
</feature>
<feature type="domain" description="S4 RNA-binding">
    <location>
        <begin position="43"/>
        <end position="106"/>
    </location>
</feature>
<proteinExistence type="inferred from homology"/>
<sequence length="242" mass="27110">MAIMASRKHLKRFKSPVHWPIHPKEYKWTVKPSPGPHAIENSLPLMIIVRDILKVADNAREARKIINSGEVLVDGRPRKNYKFPVGFMDVVSIPRTGDVYRVLPDERGRLVLHPIDEENAGFKLCKIVNKTTIKGGRTQLNLHDGRNYLSDDEFRVGDVVKLSIPEQEILERIPFEKDSLGLVTGGRHTGEIGKIKKINITRSSMPNTAVIETGAGKTFLTLKDYVFVIGKDESVISLPGGK</sequence>
<gene>
    <name type="primary">rps4e</name>
    <name type="ordered locus">MTH_15</name>
</gene>
<dbReference type="EMBL" id="AE000666">
    <property type="protein sequence ID" value="AAB84516.1"/>
    <property type="molecule type" value="Genomic_DNA"/>
</dbReference>
<dbReference type="PIR" id="H69066">
    <property type="entry name" value="H69066"/>
</dbReference>
<dbReference type="RefSeq" id="WP_010875657.1">
    <property type="nucleotide sequence ID" value="NC_000916.1"/>
</dbReference>
<dbReference type="SMR" id="O26123"/>
<dbReference type="FunCoup" id="O26123">
    <property type="interactions" value="144"/>
</dbReference>
<dbReference type="STRING" id="187420.MTH_15"/>
<dbReference type="PaxDb" id="187420-MTH_15"/>
<dbReference type="DNASU" id="1469977"/>
<dbReference type="EnsemblBacteria" id="AAB84516">
    <property type="protein sequence ID" value="AAB84516"/>
    <property type="gene ID" value="MTH_15"/>
</dbReference>
<dbReference type="KEGG" id="mth:MTH_15"/>
<dbReference type="PATRIC" id="fig|187420.15.peg.15"/>
<dbReference type="HOGENOM" id="CLU_060400_0_0_2"/>
<dbReference type="InParanoid" id="O26123"/>
<dbReference type="Proteomes" id="UP000005223">
    <property type="component" value="Chromosome"/>
</dbReference>
<dbReference type="GO" id="GO:0022627">
    <property type="term" value="C:cytosolic small ribosomal subunit"/>
    <property type="evidence" value="ECO:0007669"/>
    <property type="project" value="TreeGrafter"/>
</dbReference>
<dbReference type="GO" id="GO:0019843">
    <property type="term" value="F:rRNA binding"/>
    <property type="evidence" value="ECO:0007669"/>
    <property type="project" value="UniProtKB-KW"/>
</dbReference>
<dbReference type="GO" id="GO:0003735">
    <property type="term" value="F:structural constituent of ribosome"/>
    <property type="evidence" value="ECO:0007669"/>
    <property type="project" value="InterPro"/>
</dbReference>
<dbReference type="GO" id="GO:0006412">
    <property type="term" value="P:translation"/>
    <property type="evidence" value="ECO:0007669"/>
    <property type="project" value="UniProtKB-UniRule"/>
</dbReference>
<dbReference type="CDD" id="cd06087">
    <property type="entry name" value="KOW_RPS4"/>
    <property type="match status" value="1"/>
</dbReference>
<dbReference type="CDD" id="cd00165">
    <property type="entry name" value="S4"/>
    <property type="match status" value="1"/>
</dbReference>
<dbReference type="FunFam" id="3.10.290.10:FF:000002">
    <property type="entry name" value="40S ribosomal protein S4"/>
    <property type="match status" value="1"/>
</dbReference>
<dbReference type="Gene3D" id="2.30.30.30">
    <property type="match status" value="1"/>
</dbReference>
<dbReference type="Gene3D" id="2.40.50.740">
    <property type="match status" value="1"/>
</dbReference>
<dbReference type="Gene3D" id="3.10.290.10">
    <property type="entry name" value="RNA-binding S4 domain"/>
    <property type="match status" value="1"/>
</dbReference>
<dbReference type="HAMAP" id="MF_00485">
    <property type="entry name" value="Ribosomal_eS4"/>
    <property type="match status" value="1"/>
</dbReference>
<dbReference type="InterPro" id="IPR014722">
    <property type="entry name" value="Rib_uL2_dom2"/>
</dbReference>
<dbReference type="InterPro" id="IPR000876">
    <property type="entry name" value="Ribosomal_eS4"/>
</dbReference>
<dbReference type="InterPro" id="IPR013845">
    <property type="entry name" value="Ribosomal_eS4_central_region"/>
</dbReference>
<dbReference type="InterPro" id="IPR038237">
    <property type="entry name" value="Ribosomal_eS4_central_sf"/>
</dbReference>
<dbReference type="InterPro" id="IPR041982">
    <property type="entry name" value="Ribosomal_eS4_KOW"/>
</dbReference>
<dbReference type="InterPro" id="IPR013843">
    <property type="entry name" value="Ribosomal_eS4_N"/>
</dbReference>
<dbReference type="InterPro" id="IPR018199">
    <property type="entry name" value="Ribosomal_eS4_N_CS"/>
</dbReference>
<dbReference type="InterPro" id="IPR002942">
    <property type="entry name" value="S4_RNA-bd"/>
</dbReference>
<dbReference type="InterPro" id="IPR036986">
    <property type="entry name" value="S4_RNA-bd_sf"/>
</dbReference>
<dbReference type="NCBIfam" id="NF003312">
    <property type="entry name" value="PRK04313.1"/>
    <property type="match status" value="1"/>
</dbReference>
<dbReference type="PANTHER" id="PTHR11581">
    <property type="entry name" value="30S/40S RIBOSOMAL PROTEIN S4"/>
    <property type="match status" value="1"/>
</dbReference>
<dbReference type="PANTHER" id="PTHR11581:SF0">
    <property type="entry name" value="SMALL RIBOSOMAL SUBUNIT PROTEIN ES4"/>
    <property type="match status" value="1"/>
</dbReference>
<dbReference type="Pfam" id="PF00900">
    <property type="entry name" value="Ribosomal_S4e"/>
    <property type="match status" value="1"/>
</dbReference>
<dbReference type="Pfam" id="PF08071">
    <property type="entry name" value="RS4NT"/>
    <property type="match status" value="1"/>
</dbReference>
<dbReference type="Pfam" id="PF01479">
    <property type="entry name" value="S4"/>
    <property type="match status" value="1"/>
</dbReference>
<dbReference type="PIRSF" id="PIRSF002116">
    <property type="entry name" value="Ribosomal_S4"/>
    <property type="match status" value="1"/>
</dbReference>
<dbReference type="SMART" id="SM00363">
    <property type="entry name" value="S4"/>
    <property type="match status" value="1"/>
</dbReference>
<dbReference type="SUPFAM" id="SSF55174">
    <property type="entry name" value="Alpha-L RNA-binding motif"/>
    <property type="match status" value="1"/>
</dbReference>
<dbReference type="PROSITE" id="PS00528">
    <property type="entry name" value="RIBOSOMAL_S4E"/>
    <property type="match status" value="1"/>
</dbReference>
<dbReference type="PROSITE" id="PS50889">
    <property type="entry name" value="S4"/>
    <property type="match status" value="1"/>
</dbReference>
<accession>O26123</accession>
<protein>
    <recommendedName>
        <fullName evidence="1">Small ribosomal subunit protein eS4</fullName>
    </recommendedName>
    <alternativeName>
        <fullName>30S ribosomal protein S4e</fullName>
    </alternativeName>
</protein>
<evidence type="ECO:0000305" key="1"/>
<organism>
    <name type="scientific">Methanothermobacter thermautotrophicus (strain ATCC 29096 / DSM 1053 / JCM 10044 / NBRC 100330 / Delta H)</name>
    <name type="common">Methanobacterium thermoautotrophicum</name>
    <dbReference type="NCBI Taxonomy" id="187420"/>
    <lineage>
        <taxon>Archaea</taxon>
        <taxon>Methanobacteriati</taxon>
        <taxon>Methanobacteriota</taxon>
        <taxon>Methanomada group</taxon>
        <taxon>Methanobacteria</taxon>
        <taxon>Methanobacteriales</taxon>
        <taxon>Methanobacteriaceae</taxon>
        <taxon>Methanothermobacter</taxon>
    </lineage>
</organism>
<reference key="1">
    <citation type="journal article" date="1997" name="J. Bacteriol.">
        <title>Complete genome sequence of Methanobacterium thermoautotrophicum deltaH: functional analysis and comparative genomics.</title>
        <authorList>
            <person name="Smith D.R."/>
            <person name="Doucette-Stamm L.A."/>
            <person name="Deloughery C."/>
            <person name="Lee H.-M."/>
            <person name="Dubois J."/>
            <person name="Aldredge T."/>
            <person name="Bashirzadeh R."/>
            <person name="Blakely D."/>
            <person name="Cook R."/>
            <person name="Gilbert K."/>
            <person name="Harrison D."/>
            <person name="Hoang L."/>
            <person name="Keagle P."/>
            <person name="Lumm W."/>
            <person name="Pothier B."/>
            <person name="Qiu D."/>
            <person name="Spadafora R."/>
            <person name="Vicare R."/>
            <person name="Wang Y."/>
            <person name="Wierzbowski J."/>
            <person name="Gibson R."/>
            <person name="Jiwani N."/>
            <person name="Caruso A."/>
            <person name="Bush D."/>
            <person name="Safer H."/>
            <person name="Patwell D."/>
            <person name="Prabhakar S."/>
            <person name="McDougall S."/>
            <person name="Shimer G."/>
            <person name="Goyal A."/>
            <person name="Pietrovski S."/>
            <person name="Church G.M."/>
            <person name="Daniels C.J."/>
            <person name="Mao J.-I."/>
            <person name="Rice P."/>
            <person name="Noelling J."/>
            <person name="Reeve J.N."/>
        </authorList>
    </citation>
    <scope>NUCLEOTIDE SEQUENCE [LARGE SCALE GENOMIC DNA]</scope>
    <source>
        <strain>ATCC 29096 / DSM 1053 / JCM 10044 / NBRC 100330 / Delta H</strain>
    </source>
</reference>
<name>RS4E_METTH</name>
<keyword id="KW-1185">Reference proteome</keyword>
<keyword id="KW-0687">Ribonucleoprotein</keyword>
<keyword id="KW-0689">Ribosomal protein</keyword>
<keyword id="KW-0694">RNA-binding</keyword>
<keyword id="KW-0699">rRNA-binding</keyword>